<name>HV103_HUMAN</name>
<reference key="1">
    <citation type="journal article" date="2003" name="Nature">
        <title>The DNA sequence and analysis of human chromosome 14.</title>
        <authorList>
            <person name="Heilig R."/>
            <person name="Eckenberg R."/>
            <person name="Petit J.-L."/>
            <person name="Fonknechten N."/>
            <person name="Da Silva C."/>
            <person name="Cattolico L."/>
            <person name="Levy M."/>
            <person name="Barbe V."/>
            <person name="De Berardinis V."/>
            <person name="Ureta-Vidal A."/>
            <person name="Pelletier E."/>
            <person name="Vico V."/>
            <person name="Anthouard V."/>
            <person name="Rowen L."/>
            <person name="Madan A."/>
            <person name="Qin S."/>
            <person name="Sun H."/>
            <person name="Du H."/>
            <person name="Pepin K."/>
            <person name="Artiguenave F."/>
            <person name="Robert C."/>
            <person name="Cruaud C."/>
            <person name="Bruels T."/>
            <person name="Jaillon O."/>
            <person name="Friedlander L."/>
            <person name="Samson G."/>
            <person name="Brottier P."/>
            <person name="Cure S."/>
            <person name="Segurens B."/>
            <person name="Aniere F."/>
            <person name="Samain S."/>
            <person name="Crespeau H."/>
            <person name="Abbasi N."/>
            <person name="Aiach N."/>
            <person name="Boscus D."/>
            <person name="Dickhoff R."/>
            <person name="Dors M."/>
            <person name="Dubois I."/>
            <person name="Friedman C."/>
            <person name="Gouyvenoux M."/>
            <person name="James R."/>
            <person name="Madan A."/>
            <person name="Mairey-Estrada B."/>
            <person name="Mangenot S."/>
            <person name="Martins N."/>
            <person name="Menard M."/>
            <person name="Oztas S."/>
            <person name="Ratcliffe A."/>
            <person name="Shaffer T."/>
            <person name="Trask B."/>
            <person name="Vacherie B."/>
            <person name="Bellemere C."/>
            <person name="Belser C."/>
            <person name="Besnard-Gonnet M."/>
            <person name="Bartol-Mavel D."/>
            <person name="Boutard M."/>
            <person name="Briez-Silla S."/>
            <person name="Combette S."/>
            <person name="Dufosse-Laurent V."/>
            <person name="Ferron C."/>
            <person name="Lechaplais C."/>
            <person name="Louesse C."/>
            <person name="Muselet D."/>
            <person name="Magdelenat G."/>
            <person name="Pateau E."/>
            <person name="Petit E."/>
            <person name="Sirvain-Trukniewicz P."/>
            <person name="Trybou A."/>
            <person name="Vega-Czarny N."/>
            <person name="Bataille E."/>
            <person name="Bluet E."/>
            <person name="Bordelais I."/>
            <person name="Dubois M."/>
            <person name="Dumont C."/>
            <person name="Guerin T."/>
            <person name="Haffray S."/>
            <person name="Hammadi R."/>
            <person name="Muanga J."/>
            <person name="Pellouin V."/>
            <person name="Robert D."/>
            <person name="Wunderle E."/>
            <person name="Gauguet G."/>
            <person name="Roy A."/>
            <person name="Sainte-Marthe L."/>
            <person name="Verdier J."/>
            <person name="Verdier-Discala C."/>
            <person name="Hillier L.W."/>
            <person name="Fulton L."/>
            <person name="McPherson J."/>
            <person name="Matsuda F."/>
            <person name="Wilson R."/>
            <person name="Scarpelli C."/>
            <person name="Gyapay G."/>
            <person name="Wincker P."/>
            <person name="Saurin W."/>
            <person name="Quetier F."/>
            <person name="Waterston R."/>
            <person name="Hood L."/>
            <person name="Weissenbach J."/>
        </authorList>
    </citation>
    <scope>NUCLEOTIDE SEQUENCE [LARGE SCALE GENOMIC DNA] (IMGT ALLELE IGHV1-3*01)</scope>
</reference>
<reference key="2">
    <citation type="journal article" date="2001" name="Exp. Clin. Immunogenet.">
        <title>Nomenclature of the human immunoglobulin heavy (IGH) genes.</title>
        <authorList>
            <person name="Lefranc M.P."/>
        </authorList>
    </citation>
    <scope>NOMENCLATURE</scope>
</reference>
<reference key="3">
    <citation type="book" date="2001" name="The Immunoglobulin FactsBook.">
        <title>The Immunoglobulin FactsBook.</title>
        <editorList>
            <person name="Lefranc M.P."/>
            <person name="Lefranc G."/>
        </editorList>
        <authorList>
            <person name="Lefranc M.P."/>
            <person name="Lefranc G."/>
        </authorList>
    </citation>
    <scope>NOMENCLATURE</scope>
</reference>
<reference key="4">
    <citation type="journal article" date="2007" name="Annu. Rev. Genet.">
        <title>Immunoglobulin somatic hypermutation.</title>
        <authorList>
            <person name="Teng G."/>
            <person name="Papavasiliou F.N."/>
        </authorList>
    </citation>
    <scope>REVIEW ON SOMATIC HYPERMUTATION</scope>
</reference>
<reference key="5">
    <citation type="journal article" date="2010" name="J. Allergy Clin. Immunol.">
        <title>Structure and function of immunoglobulins.</title>
        <authorList>
            <person name="Schroeder H.W. Jr."/>
            <person name="Cavacini L."/>
        </authorList>
    </citation>
    <scope>REVIEW ON IMMUNOGLOBULINS</scope>
</reference>
<reference key="6">
    <citation type="journal article" date="2012" name="Nat. Rev. Immunol.">
        <title>Molecular programming of B cell memory.</title>
        <authorList>
            <person name="McHeyzer-Williams M."/>
            <person name="Okitsu S."/>
            <person name="Wang N."/>
            <person name="McHeyzer-Williams L."/>
        </authorList>
    </citation>
    <scope>REVIEW ON FUNCTION</scope>
</reference>
<reference key="7">
    <citation type="journal article" date="2014" name="Front. Immunol.">
        <title>Immunoglobulin and T Cell Receptor Genes: IMGT((R)) and the Birth and Rise of Immunoinformatics.</title>
        <authorList>
            <person name="Lefranc M.P."/>
        </authorList>
    </citation>
    <scope>NOMENCLATURE</scope>
</reference>
<feature type="signal peptide" evidence="2">
    <location>
        <begin position="1"/>
        <end position="19"/>
    </location>
</feature>
<feature type="chain" id="PRO_5007392169" description="Immunoglobulin heavy variable 1-3" evidence="2">
    <location>
        <begin position="20"/>
        <end position="117"/>
    </location>
</feature>
<feature type="domain" description="Ig-like" evidence="3">
    <location>
        <begin position="20"/>
        <end position="117" status="greater than"/>
    </location>
</feature>
<feature type="region of interest" description="Framework-1" evidence="1">
    <location>
        <begin position="20"/>
        <end position="44"/>
    </location>
</feature>
<feature type="region of interest" description="Complementarity-determining-1" evidence="1">
    <location>
        <begin position="45"/>
        <end position="52"/>
    </location>
</feature>
<feature type="region of interest" description="Framework-2" evidence="1">
    <location>
        <begin position="53"/>
        <end position="69"/>
    </location>
</feature>
<feature type="region of interest" description="Complementarity-determining-2" evidence="1">
    <location>
        <begin position="70"/>
        <end position="77"/>
    </location>
</feature>
<feature type="region of interest" description="Framework-3" evidence="1">
    <location>
        <begin position="78"/>
        <end position="115"/>
    </location>
</feature>
<feature type="region of interest" description="Complementarity-determining-3" evidence="1">
    <location>
        <begin position="116"/>
        <end position="117" status="greater than"/>
    </location>
</feature>
<feature type="disulfide bond" evidence="3">
    <location>
        <begin position="41"/>
        <end position="115"/>
    </location>
</feature>
<feature type="non-terminal residue">
    <location>
        <position position="117"/>
    </location>
</feature>
<protein>
    <recommendedName>
        <fullName evidence="4 9">Immunoglobulin heavy variable 1-3</fullName>
    </recommendedName>
</protein>
<organism>
    <name type="scientific">Homo sapiens</name>
    <name type="common">Human</name>
    <dbReference type="NCBI Taxonomy" id="9606"/>
    <lineage>
        <taxon>Eukaryota</taxon>
        <taxon>Metazoa</taxon>
        <taxon>Chordata</taxon>
        <taxon>Craniata</taxon>
        <taxon>Vertebrata</taxon>
        <taxon>Euteleostomi</taxon>
        <taxon>Mammalia</taxon>
        <taxon>Eutheria</taxon>
        <taxon>Euarchontoglires</taxon>
        <taxon>Primates</taxon>
        <taxon>Haplorrhini</taxon>
        <taxon>Catarrhini</taxon>
        <taxon>Hominidae</taxon>
        <taxon>Homo</taxon>
    </lineage>
</organism>
<dbReference type="EMBL" id="AC244226">
    <property type="status" value="NOT_ANNOTATED_CDS"/>
    <property type="molecule type" value="Genomic_DNA"/>
</dbReference>
<dbReference type="SMR" id="A0A0C4DH29"/>
<dbReference type="FunCoup" id="A0A0C4DH29">
    <property type="interactions" value="307"/>
</dbReference>
<dbReference type="STRING" id="9606.ENSP00000479119"/>
<dbReference type="IMGT_GENE-DB" id="IGHV1-3"/>
<dbReference type="BioMuta" id="IGHV1-3"/>
<dbReference type="jPOST" id="A0A0C4DH29"/>
<dbReference type="MassIVE" id="A0A0C4DH29"/>
<dbReference type="Ensembl" id="ENST00000390595.3">
    <property type="protein sequence ID" value="ENSP00000375004.2"/>
    <property type="gene ID" value="ENSG00000211935.3"/>
</dbReference>
<dbReference type="Ensembl" id="ENST00000632977.1">
    <property type="protein sequence ID" value="ENSP00000487722.1"/>
    <property type="gene ID" value="ENSG00000282213.1"/>
</dbReference>
<dbReference type="AGR" id="HGNC:5552"/>
<dbReference type="GeneCards" id="IGHV1-3"/>
<dbReference type="HGNC" id="HGNC:5552">
    <property type="gene designation" value="IGHV1-3"/>
</dbReference>
<dbReference type="HPA" id="ENSG00000211935">
    <property type="expression patterns" value="Tissue enhanced (intestine, lymphoid tissue)"/>
</dbReference>
<dbReference type="neXtProt" id="NX_A0A0C4DH29"/>
<dbReference type="VEuPathDB" id="HostDB:ENSG00000211935"/>
<dbReference type="GeneTree" id="ENSGT00950000183013"/>
<dbReference type="HOGENOM" id="CLU_077975_5_2_1"/>
<dbReference type="InParanoid" id="A0A0C4DH29"/>
<dbReference type="OMA" id="KWMGRIN"/>
<dbReference type="PAN-GO" id="A0A0C4DH29">
    <property type="GO annotations" value="11 GO annotations based on evolutionary models"/>
</dbReference>
<dbReference type="PhylomeDB" id="A0A0C4DH29"/>
<dbReference type="SignaLink" id="A0A0C4DH29"/>
<dbReference type="ChiTaRS" id="IGHV1-3">
    <property type="organism name" value="human"/>
</dbReference>
<dbReference type="Pharos" id="A0A0C4DH29">
    <property type="development level" value="Tdark"/>
</dbReference>
<dbReference type="PRO" id="PR:A0A0C4DH29"/>
<dbReference type="Proteomes" id="UP000005640">
    <property type="component" value="Chromosome 14"/>
</dbReference>
<dbReference type="RNAct" id="A0A0C4DH29">
    <property type="molecule type" value="protein"/>
</dbReference>
<dbReference type="Bgee" id="ENSG00000211935">
    <property type="expression patterns" value="Expressed in rectum and 92 other cell types or tissues"/>
</dbReference>
<dbReference type="GO" id="GO:0005576">
    <property type="term" value="C:extracellular region"/>
    <property type="evidence" value="ECO:0007669"/>
    <property type="project" value="UniProtKB-SubCell"/>
</dbReference>
<dbReference type="GO" id="GO:0019814">
    <property type="term" value="C:immunoglobulin complex"/>
    <property type="evidence" value="ECO:0007669"/>
    <property type="project" value="UniProtKB-KW"/>
</dbReference>
<dbReference type="GO" id="GO:0005886">
    <property type="term" value="C:plasma membrane"/>
    <property type="evidence" value="ECO:0007669"/>
    <property type="project" value="UniProtKB-SubCell"/>
</dbReference>
<dbReference type="GO" id="GO:0003823">
    <property type="term" value="F:antigen binding"/>
    <property type="evidence" value="ECO:0000318"/>
    <property type="project" value="GO_Central"/>
</dbReference>
<dbReference type="GO" id="GO:0016064">
    <property type="term" value="P:immunoglobulin mediated immune response"/>
    <property type="evidence" value="ECO:0000318"/>
    <property type="project" value="GO_Central"/>
</dbReference>
<dbReference type="CDD" id="cd04981">
    <property type="entry name" value="IgV_H"/>
    <property type="match status" value="1"/>
</dbReference>
<dbReference type="FunFam" id="2.60.40.10:FF:000556">
    <property type="entry name" value="Immunoglobulin heavy variable 7-81 (non-functional)"/>
    <property type="match status" value="1"/>
</dbReference>
<dbReference type="Gene3D" id="2.60.40.10">
    <property type="entry name" value="Immunoglobulins"/>
    <property type="match status" value="1"/>
</dbReference>
<dbReference type="InterPro" id="IPR007110">
    <property type="entry name" value="Ig-like_dom"/>
</dbReference>
<dbReference type="InterPro" id="IPR036179">
    <property type="entry name" value="Ig-like_dom_sf"/>
</dbReference>
<dbReference type="InterPro" id="IPR013783">
    <property type="entry name" value="Ig-like_fold"/>
</dbReference>
<dbReference type="InterPro" id="IPR013106">
    <property type="entry name" value="Ig_V-set"/>
</dbReference>
<dbReference type="InterPro" id="IPR050199">
    <property type="entry name" value="IgHV"/>
</dbReference>
<dbReference type="PANTHER" id="PTHR23266">
    <property type="entry name" value="IMMUNOGLOBULIN HEAVY CHAIN"/>
    <property type="match status" value="1"/>
</dbReference>
<dbReference type="Pfam" id="PF07686">
    <property type="entry name" value="V-set"/>
    <property type="match status" value="1"/>
</dbReference>
<dbReference type="SMART" id="SM00406">
    <property type="entry name" value="IGv"/>
    <property type="match status" value="1"/>
</dbReference>
<dbReference type="SUPFAM" id="SSF48726">
    <property type="entry name" value="Immunoglobulin"/>
    <property type="match status" value="1"/>
</dbReference>
<dbReference type="PROSITE" id="PS50835">
    <property type="entry name" value="IG_LIKE"/>
    <property type="match status" value="1"/>
</dbReference>
<comment type="function">
    <text evidence="5 6 7 8">V region of the variable domain of immunoglobulin heavy chains that participates in the antigen recognition (PubMed:24600447). Immunoglobulins, also known as antibodies, are membrane-bound or secreted glycoproteins produced by B lymphocytes. In the recognition phase of humoral immunity, the membrane-bound immunoglobulins serve as receptors which, upon binding of a specific antigen, trigger the clonal expansion and differentiation of B lymphocytes into immunoglobulins-secreting plasma cells. Secreted immunoglobulins mediate the effector phase of humoral immunity, which results in the elimination of bound antigens (PubMed:20176268, PubMed:22158414). The antigen binding site is formed by the variable domain of one heavy chain, together with that of its associated light chain. Thus, each immunoglobulin has two antigen binding sites with remarkable affinity for a particular antigen. The variable domains are assembled by a process called V-(D)-J rearrangement and can then be subjected to somatic hypermutations which, after exposure to antigen and selection, allow affinity maturation for a particular antigen (PubMed:17576170, PubMed:20176268).</text>
</comment>
<comment type="subunit">
    <text evidence="6">Immunoglobulins are composed of two identical heavy chains and two identical light chains; disulfide-linked.</text>
</comment>
<comment type="subcellular location">
    <subcellularLocation>
        <location evidence="6 7">Secreted</location>
    </subcellularLocation>
    <subcellularLocation>
        <location evidence="6 7">Cell membrane</location>
    </subcellularLocation>
</comment>
<comment type="polymorphism">
    <text evidence="10">There are several alleles. The sequence shown is that of IMGT allele IGHV1-3*01.</text>
</comment>
<comment type="caution">
    <text evidence="10">For examples of full-length immunoglobulin heavy chains (of different isotypes) see AC P0DOX2, AC P0DOX3, AC P0DOX4, AC P0DOX5 and AC P0DOX6.</text>
</comment>
<keyword id="KW-1064">Adaptive immunity</keyword>
<keyword id="KW-1003">Cell membrane</keyword>
<keyword id="KW-1015">Disulfide bond</keyword>
<keyword id="KW-0391">Immunity</keyword>
<keyword id="KW-1280">Immunoglobulin</keyword>
<keyword id="KW-0393">Immunoglobulin domain</keyword>
<keyword id="KW-0472">Membrane</keyword>
<keyword id="KW-1267">Proteomics identification</keyword>
<keyword id="KW-1185">Reference proteome</keyword>
<keyword id="KW-0964">Secreted</keyword>
<keyword id="KW-0732">Signal</keyword>
<gene>
    <name evidence="4 9" type="primary">IGHV1-3</name>
</gene>
<accession>A0A0C4DH29</accession>
<proteinExistence type="evidence at protein level"/>
<sequence length="117" mass="13008">MDWTWRILFLVAAATGAHSQVQLVQSGAEVKKPGASVKVSCKASGYTFTSYAMHWVRQAPGQRLEWMGWINAGNGNTKYSQKFQGRVTITRDTSASTAYMELSSLRSEDTAVYYCAR</sequence>
<evidence type="ECO:0000250" key="1">
    <source>
        <dbReference type="UniProtKB" id="P23083"/>
    </source>
</evidence>
<evidence type="ECO:0000255" key="2"/>
<evidence type="ECO:0000255" key="3">
    <source>
        <dbReference type="PROSITE-ProRule" id="PRU00114"/>
    </source>
</evidence>
<evidence type="ECO:0000303" key="4">
    <source>
    </source>
</evidence>
<evidence type="ECO:0000303" key="5">
    <source>
    </source>
</evidence>
<evidence type="ECO:0000303" key="6">
    <source>
    </source>
</evidence>
<evidence type="ECO:0000303" key="7">
    <source>
    </source>
</evidence>
<evidence type="ECO:0000303" key="8">
    <source>
    </source>
</evidence>
<evidence type="ECO:0000303" key="9">
    <source ref="3"/>
</evidence>
<evidence type="ECO:0000305" key="10"/>